<sequence length="428" mass="47716">MIIGIDDTDSNEGMCTTYLGALLLEELQEYGNIETLPLLVRLNPTIPYKTRGNAAVALKLKTDCPEKVIAHVTSRIEELARMECEKTNPGAVFIQDKDYGRLRPVLMRFLEEAVRDVIEIKKAKDLISILGIASKGFKNGRGLIGALAACGAMLDQDGLDFTFEHLAYRQKDRWGTPREVDKKSFFEADKETYPETWDTVDLTNRLVVCVPHSADPVLFGIRGESPEIVNKAASLIRAEPVERFAVYRTNQGTDMHLLPAQNIAETRDMHSYRLEGTVSAAPKTLEGGHVIFAVRDREGAEIDCAAFEPTKNFRSLIRKLVPGDLICLSGSVTSGTLNIEKIEIKSLAPVYREENPICPECGKHMKSSGKGQGFRCKKCGTDSPSKVRFEGDRDLDPGLYEVPPCARRHLAKPLVREERRDMRLNPAR</sequence>
<name>TIAS_METMA</name>
<feature type="chain" id="PRO_0000407299" description="tRNA(Ile2) 2-agmatinylcytidine synthetase TiaS">
    <location>
        <begin position="1"/>
        <end position="428"/>
    </location>
</feature>
<accession>Q8PZP7</accession>
<keyword id="KW-0067">ATP-binding</keyword>
<keyword id="KW-0963">Cytoplasm</keyword>
<keyword id="KW-0436">Ligase</keyword>
<keyword id="KW-0547">Nucleotide-binding</keyword>
<keyword id="KW-0819">tRNA processing</keyword>
<comment type="function">
    <text evidence="1">ATP-dependent agmatine transferase that catalyzes the formation of 2-agmatinylcytidine (agm2C) at the wobble position (C34) of tRNA(Ile2), converting the codon specificity from AUG to AUA.</text>
</comment>
<comment type="catalytic activity">
    <reaction evidence="1">
        <text>cytidine(34) in tRNA(Ile2) + agmatine + ATP + H2O = 2-agmatinylcytidine(34) in tRNA(Ile2) + AMP + 2 phosphate + 2 H(+)</text>
        <dbReference type="Rhea" id="RHEA:43608"/>
        <dbReference type="Rhea" id="RHEA-COMP:10625"/>
        <dbReference type="Rhea" id="RHEA-COMP:10626"/>
        <dbReference type="ChEBI" id="CHEBI:15377"/>
        <dbReference type="ChEBI" id="CHEBI:15378"/>
        <dbReference type="ChEBI" id="CHEBI:30616"/>
        <dbReference type="ChEBI" id="CHEBI:43474"/>
        <dbReference type="ChEBI" id="CHEBI:58145"/>
        <dbReference type="ChEBI" id="CHEBI:82748"/>
        <dbReference type="ChEBI" id="CHEBI:83545"/>
        <dbReference type="ChEBI" id="CHEBI:456215"/>
        <dbReference type="EC" id="6.3.4.22"/>
    </reaction>
</comment>
<comment type="subcellular location">
    <subcellularLocation>
        <location evidence="1">Cytoplasm</location>
    </subcellularLocation>
</comment>
<comment type="similarity">
    <text evidence="1">Belongs to the TiaS family.</text>
</comment>
<comment type="sequence caution" evidence="2">
    <conflict type="erroneous initiation">
        <sequence resource="EMBL-CDS" id="AAM30141"/>
    </conflict>
    <text>Extended N-terminus.</text>
</comment>
<dbReference type="EC" id="6.3.4.22" evidence="1"/>
<dbReference type="EMBL" id="AE008384">
    <property type="protein sequence ID" value="AAM30141.1"/>
    <property type="status" value="ALT_INIT"/>
    <property type="molecule type" value="Genomic_DNA"/>
</dbReference>
<dbReference type="RefSeq" id="WP_048036545.1">
    <property type="nucleotide sequence ID" value="NC_003901.1"/>
</dbReference>
<dbReference type="SMR" id="Q8PZP7"/>
<dbReference type="KEGG" id="mma:MM_0445"/>
<dbReference type="PATRIC" id="fig|192952.21.peg.537"/>
<dbReference type="eggNOG" id="arCOG01115">
    <property type="taxonomic scope" value="Archaea"/>
</dbReference>
<dbReference type="HOGENOM" id="CLU_675459_0_0_2"/>
<dbReference type="Proteomes" id="UP000000595">
    <property type="component" value="Chromosome"/>
</dbReference>
<dbReference type="GO" id="GO:0005737">
    <property type="term" value="C:cytoplasm"/>
    <property type="evidence" value="ECO:0007669"/>
    <property type="project" value="UniProtKB-SubCell"/>
</dbReference>
<dbReference type="GO" id="GO:0005524">
    <property type="term" value="F:ATP binding"/>
    <property type="evidence" value="ECO:0007669"/>
    <property type="project" value="UniProtKB-KW"/>
</dbReference>
<dbReference type="GO" id="GO:0016879">
    <property type="term" value="F:ligase activity, forming carbon-nitrogen bonds"/>
    <property type="evidence" value="ECO:0007669"/>
    <property type="project" value="UniProtKB-UniRule"/>
</dbReference>
<dbReference type="GO" id="GO:0002101">
    <property type="term" value="P:tRNA wobble cytosine modification"/>
    <property type="evidence" value="ECO:0007669"/>
    <property type="project" value="UniProtKB-UniRule"/>
</dbReference>
<dbReference type="CDD" id="cd04482">
    <property type="entry name" value="RPA2_OBF_like"/>
    <property type="match status" value="1"/>
</dbReference>
<dbReference type="Gene3D" id="2.40.50.1010">
    <property type="match status" value="1"/>
</dbReference>
<dbReference type="Gene3D" id="3.30.70.2200">
    <property type="match status" value="1"/>
</dbReference>
<dbReference type="Gene3D" id="3.90.600.20">
    <property type="match status" value="1"/>
</dbReference>
<dbReference type="HAMAP" id="MF_01892">
    <property type="entry name" value="tRNA_Ile2_agm2C_synt"/>
    <property type="match status" value="1"/>
</dbReference>
<dbReference type="InterPro" id="IPR053870">
    <property type="entry name" value="TiaS-like_TCKD"/>
</dbReference>
<dbReference type="InterPro" id="IPR013696">
    <property type="entry name" value="TiaS_FLD"/>
</dbReference>
<dbReference type="InterPro" id="IPR024913">
    <property type="entry name" value="tRNA_Ile2__agm2C_synt"/>
</dbReference>
<dbReference type="InterPro" id="IPR055394">
    <property type="entry name" value="Zn_ribbon_TiaS"/>
</dbReference>
<dbReference type="PANTHER" id="PTHR40705">
    <property type="entry name" value="TRNA(ILE2) 2-AGMATINYLCYTIDINE SYNTHETASE TIAS"/>
    <property type="match status" value="1"/>
</dbReference>
<dbReference type="PANTHER" id="PTHR40705:SF1">
    <property type="entry name" value="TRNA(ILE2) 2-AGMATINYLCYTIDINE SYNTHETASE TIAS"/>
    <property type="match status" value="1"/>
</dbReference>
<dbReference type="Pfam" id="PF08489">
    <property type="entry name" value="TiaS_FLD"/>
    <property type="match status" value="1"/>
</dbReference>
<dbReference type="Pfam" id="PF22641">
    <property type="entry name" value="TiaS_TCKD"/>
    <property type="match status" value="1"/>
</dbReference>
<dbReference type="Pfam" id="PF23783">
    <property type="entry name" value="Zn_ribbon_TiaS"/>
    <property type="match status" value="1"/>
</dbReference>
<proteinExistence type="inferred from homology"/>
<protein>
    <recommendedName>
        <fullName evidence="1">tRNA(Ile2) 2-agmatinylcytidine synthetase TiaS</fullName>
        <shortName evidence="1">tRNA(Ile2)-agm2C synthetase</shortName>
        <ecNumber evidence="1">6.3.4.22</ecNumber>
    </recommendedName>
    <alternativeName>
        <fullName evidence="1">tRNA(Ile2) agmatidine synthetase</fullName>
    </alternativeName>
</protein>
<gene>
    <name evidence="1" type="primary">tiaS</name>
    <name type="ordered locus">MM_0445</name>
</gene>
<reference key="1">
    <citation type="journal article" date="2002" name="J. Mol. Microbiol. Biotechnol.">
        <title>The genome of Methanosarcina mazei: evidence for lateral gene transfer between Bacteria and Archaea.</title>
        <authorList>
            <person name="Deppenmeier U."/>
            <person name="Johann A."/>
            <person name="Hartsch T."/>
            <person name="Merkl R."/>
            <person name="Schmitz R.A."/>
            <person name="Martinez-Arias R."/>
            <person name="Henne A."/>
            <person name="Wiezer A."/>
            <person name="Baeumer S."/>
            <person name="Jacobi C."/>
            <person name="Brueggemann H."/>
            <person name="Lienard T."/>
            <person name="Christmann A."/>
            <person name="Boemecke M."/>
            <person name="Steckel S."/>
            <person name="Bhattacharyya A."/>
            <person name="Lykidis A."/>
            <person name="Overbeek R."/>
            <person name="Klenk H.-P."/>
            <person name="Gunsalus R.P."/>
            <person name="Fritz H.-J."/>
            <person name="Gottschalk G."/>
        </authorList>
    </citation>
    <scope>NUCLEOTIDE SEQUENCE [LARGE SCALE GENOMIC DNA]</scope>
    <source>
        <strain>ATCC BAA-159 / DSM 3647 / Goe1 / Go1 / JCM 11833 / OCM 88</strain>
    </source>
</reference>
<organism>
    <name type="scientific">Methanosarcina mazei (strain ATCC BAA-159 / DSM 3647 / Goe1 / Go1 / JCM 11833 / OCM 88)</name>
    <name type="common">Methanosarcina frisia</name>
    <dbReference type="NCBI Taxonomy" id="192952"/>
    <lineage>
        <taxon>Archaea</taxon>
        <taxon>Methanobacteriati</taxon>
        <taxon>Methanobacteriota</taxon>
        <taxon>Stenosarchaea group</taxon>
        <taxon>Methanomicrobia</taxon>
        <taxon>Methanosarcinales</taxon>
        <taxon>Methanosarcinaceae</taxon>
        <taxon>Methanosarcina</taxon>
    </lineage>
</organism>
<evidence type="ECO:0000255" key="1">
    <source>
        <dbReference type="HAMAP-Rule" id="MF_01892"/>
    </source>
</evidence>
<evidence type="ECO:0000305" key="2"/>